<name>TRPB_AFIC5</name>
<sequence length="405" mass="43794">MSLPKPNSFRAGPDERGHFGTFGGRFVAETLMPLILDLEKAYAAAKADPSFQKEMNGYLKDYVGRPSPLYFAERLTEHLGGAKIYLKREELNHTGSHKVNNVLGQIMVARRMGKKRIIAETGAGQHGVATATLCARFGLECIVYMGAVDVARQEPNVIRMEMLGAKVVPVQSGTRTLKDAMNDALRDWVTNVATTFYCIGTVAGPHPYPAMVRDFQSVIGHETREQMMAAEGRLPDSLVACIGGGSNAMGLFHPFLDEPAVEIFGVEAAGHGLTNLHAASLAGGRPGVLHGNRTYLLMNEDGQIQDAHSISAGLDYPGIGPEHAWLHETGRVTYLSATDEEALAAFQLLSRLEGIIPALESAHAIAKLSQLAPKRPRDHLMVVNLSGRGDKDVPQVGDILRGRKS</sequence>
<reference key="1">
    <citation type="journal article" date="2008" name="J. Bacteriol.">
        <title>Genome sequence of the chemolithoautotrophic bacterium Oligotropha carboxidovorans OM5T.</title>
        <authorList>
            <person name="Paul D."/>
            <person name="Bridges S."/>
            <person name="Burgess S.C."/>
            <person name="Dandass Y."/>
            <person name="Lawrence M.L."/>
        </authorList>
    </citation>
    <scope>NUCLEOTIDE SEQUENCE [LARGE SCALE GENOMIC DNA]</scope>
    <source>
        <strain>ATCC 49405 / DSM 1227 / KCTC 32145 / OM5</strain>
    </source>
</reference>
<reference key="2">
    <citation type="journal article" date="2011" name="J. Bacteriol.">
        <title>Complete genome sequences of the chemolithoautotrophic Oligotropha carboxidovorans strains OM4 and OM5.</title>
        <authorList>
            <person name="Volland S."/>
            <person name="Rachinger M."/>
            <person name="Strittmatter A."/>
            <person name="Daniel R."/>
            <person name="Gottschalk G."/>
            <person name="Meyer O."/>
        </authorList>
    </citation>
    <scope>NUCLEOTIDE SEQUENCE [LARGE SCALE GENOMIC DNA]</scope>
    <source>
        <strain>ATCC 49405 / DSM 1227 / KCTC 32145 / OM5</strain>
    </source>
</reference>
<feature type="chain" id="PRO_1000095799" description="Tryptophan synthase beta chain">
    <location>
        <begin position="1"/>
        <end position="405"/>
    </location>
</feature>
<feature type="modified residue" description="N6-(pyridoxal phosphate)lysine" evidence="1">
    <location>
        <position position="98"/>
    </location>
</feature>
<organism>
    <name type="scientific">Afipia carboxidovorans (strain ATCC 49405 / DSM 1227 / KCTC 32145 / OM5)</name>
    <name type="common">Oligotropha carboxidovorans</name>
    <dbReference type="NCBI Taxonomy" id="504832"/>
    <lineage>
        <taxon>Bacteria</taxon>
        <taxon>Pseudomonadati</taxon>
        <taxon>Pseudomonadota</taxon>
        <taxon>Alphaproteobacteria</taxon>
        <taxon>Hyphomicrobiales</taxon>
        <taxon>Nitrobacteraceae</taxon>
        <taxon>Afipia</taxon>
    </lineage>
</organism>
<comment type="function">
    <text evidence="1">The beta subunit is responsible for the synthesis of L-tryptophan from indole and L-serine.</text>
</comment>
<comment type="catalytic activity">
    <reaction evidence="1">
        <text>(1S,2R)-1-C-(indol-3-yl)glycerol 3-phosphate + L-serine = D-glyceraldehyde 3-phosphate + L-tryptophan + H2O</text>
        <dbReference type="Rhea" id="RHEA:10532"/>
        <dbReference type="ChEBI" id="CHEBI:15377"/>
        <dbReference type="ChEBI" id="CHEBI:33384"/>
        <dbReference type="ChEBI" id="CHEBI:57912"/>
        <dbReference type="ChEBI" id="CHEBI:58866"/>
        <dbReference type="ChEBI" id="CHEBI:59776"/>
        <dbReference type="EC" id="4.2.1.20"/>
    </reaction>
</comment>
<comment type="cofactor">
    <cofactor evidence="1">
        <name>pyridoxal 5'-phosphate</name>
        <dbReference type="ChEBI" id="CHEBI:597326"/>
    </cofactor>
</comment>
<comment type="pathway">
    <text evidence="1">Amino-acid biosynthesis; L-tryptophan biosynthesis; L-tryptophan from chorismate: step 5/5.</text>
</comment>
<comment type="subunit">
    <text evidence="1">Tetramer of two alpha and two beta chains.</text>
</comment>
<comment type="similarity">
    <text evidence="1">Belongs to the TrpB family.</text>
</comment>
<proteinExistence type="inferred from homology"/>
<protein>
    <recommendedName>
        <fullName evidence="1">Tryptophan synthase beta chain</fullName>
        <ecNumber evidence="1">4.2.1.20</ecNumber>
    </recommendedName>
</protein>
<keyword id="KW-0028">Amino-acid biosynthesis</keyword>
<keyword id="KW-0057">Aromatic amino acid biosynthesis</keyword>
<keyword id="KW-0456">Lyase</keyword>
<keyword id="KW-0663">Pyridoxal phosphate</keyword>
<keyword id="KW-1185">Reference proteome</keyword>
<keyword id="KW-0822">Tryptophan biosynthesis</keyword>
<evidence type="ECO:0000255" key="1">
    <source>
        <dbReference type="HAMAP-Rule" id="MF_00133"/>
    </source>
</evidence>
<dbReference type="EC" id="4.2.1.20" evidence="1"/>
<dbReference type="EMBL" id="CP001196">
    <property type="protein sequence ID" value="ACI91622.1"/>
    <property type="molecule type" value="Genomic_DNA"/>
</dbReference>
<dbReference type="EMBL" id="CP002826">
    <property type="protein sequence ID" value="AEI04791.1"/>
    <property type="molecule type" value="Genomic_DNA"/>
</dbReference>
<dbReference type="RefSeq" id="WP_012561653.1">
    <property type="nucleotide sequence ID" value="NC_015684.1"/>
</dbReference>
<dbReference type="SMR" id="B6JCP2"/>
<dbReference type="STRING" id="504832.OCA5_c00570"/>
<dbReference type="KEGG" id="oca:OCAR_4477"/>
<dbReference type="KEGG" id="ocg:OCA5_c00570"/>
<dbReference type="PATRIC" id="fig|504832.7.peg.60"/>
<dbReference type="eggNOG" id="COG0133">
    <property type="taxonomic scope" value="Bacteria"/>
</dbReference>
<dbReference type="HOGENOM" id="CLU_016734_3_1_5"/>
<dbReference type="OrthoDB" id="9766131at2"/>
<dbReference type="UniPathway" id="UPA00035">
    <property type="reaction ID" value="UER00044"/>
</dbReference>
<dbReference type="Proteomes" id="UP000007730">
    <property type="component" value="Chromosome"/>
</dbReference>
<dbReference type="GO" id="GO:0005737">
    <property type="term" value="C:cytoplasm"/>
    <property type="evidence" value="ECO:0007669"/>
    <property type="project" value="TreeGrafter"/>
</dbReference>
<dbReference type="GO" id="GO:0004834">
    <property type="term" value="F:tryptophan synthase activity"/>
    <property type="evidence" value="ECO:0007669"/>
    <property type="project" value="UniProtKB-UniRule"/>
</dbReference>
<dbReference type="CDD" id="cd06446">
    <property type="entry name" value="Trp-synth_B"/>
    <property type="match status" value="1"/>
</dbReference>
<dbReference type="FunFam" id="3.40.50.1100:FF:000001">
    <property type="entry name" value="Tryptophan synthase beta chain"/>
    <property type="match status" value="1"/>
</dbReference>
<dbReference type="FunFam" id="3.40.50.1100:FF:000004">
    <property type="entry name" value="Tryptophan synthase beta chain"/>
    <property type="match status" value="1"/>
</dbReference>
<dbReference type="Gene3D" id="3.40.50.1100">
    <property type="match status" value="2"/>
</dbReference>
<dbReference type="HAMAP" id="MF_00133">
    <property type="entry name" value="Trp_synth_beta"/>
    <property type="match status" value="1"/>
</dbReference>
<dbReference type="InterPro" id="IPR006653">
    <property type="entry name" value="Trp_synth_b_CS"/>
</dbReference>
<dbReference type="InterPro" id="IPR006654">
    <property type="entry name" value="Trp_synth_beta"/>
</dbReference>
<dbReference type="InterPro" id="IPR023026">
    <property type="entry name" value="Trp_synth_beta/beta-like"/>
</dbReference>
<dbReference type="InterPro" id="IPR001926">
    <property type="entry name" value="TrpB-like_PALP"/>
</dbReference>
<dbReference type="InterPro" id="IPR036052">
    <property type="entry name" value="TrpB-like_PALP_sf"/>
</dbReference>
<dbReference type="NCBIfam" id="TIGR00263">
    <property type="entry name" value="trpB"/>
    <property type="match status" value="1"/>
</dbReference>
<dbReference type="PANTHER" id="PTHR48077:SF3">
    <property type="entry name" value="TRYPTOPHAN SYNTHASE"/>
    <property type="match status" value="1"/>
</dbReference>
<dbReference type="PANTHER" id="PTHR48077">
    <property type="entry name" value="TRYPTOPHAN SYNTHASE-RELATED"/>
    <property type="match status" value="1"/>
</dbReference>
<dbReference type="Pfam" id="PF00291">
    <property type="entry name" value="PALP"/>
    <property type="match status" value="1"/>
</dbReference>
<dbReference type="PIRSF" id="PIRSF001413">
    <property type="entry name" value="Trp_syn_beta"/>
    <property type="match status" value="1"/>
</dbReference>
<dbReference type="SUPFAM" id="SSF53686">
    <property type="entry name" value="Tryptophan synthase beta subunit-like PLP-dependent enzymes"/>
    <property type="match status" value="1"/>
</dbReference>
<dbReference type="PROSITE" id="PS00168">
    <property type="entry name" value="TRP_SYNTHASE_BETA"/>
    <property type="match status" value="1"/>
</dbReference>
<accession>B6JCP2</accession>
<accession>F8C092</accession>
<gene>
    <name evidence="1" type="primary">trpB</name>
    <name type="ordered locus">OCAR_4477</name>
    <name type="ordered locus">OCA5_c00570</name>
</gene>